<evidence type="ECO:0000250" key="1">
    <source>
        <dbReference type="UniProtKB" id="P58604"/>
    </source>
</evidence>
<evidence type="ECO:0000250" key="2">
    <source>
        <dbReference type="UniProtKB" id="P83919"/>
    </source>
</evidence>
<evidence type="ECO:0000255" key="3"/>
<evidence type="ECO:0000269" key="4">
    <source>
    </source>
</evidence>
<evidence type="ECO:0000303" key="5">
    <source>
    </source>
</evidence>
<evidence type="ECO:0000305" key="6"/>
<evidence type="ECO:0000305" key="7">
    <source>
    </source>
</evidence>
<proteinExistence type="evidence at protein level"/>
<organism>
    <name type="scientific">Cupiennius salei</name>
    <name type="common">American wandering spider</name>
    <dbReference type="NCBI Taxonomy" id="6928"/>
    <lineage>
        <taxon>Eukaryota</taxon>
        <taxon>Metazoa</taxon>
        <taxon>Ecdysozoa</taxon>
        <taxon>Arthropoda</taxon>
        <taxon>Chelicerata</taxon>
        <taxon>Arachnida</taxon>
        <taxon>Araneae</taxon>
        <taxon>Araneomorphae</taxon>
        <taxon>Entelegynae</taxon>
        <taxon>Lycosoidea</taxon>
        <taxon>Ctenidae</taxon>
        <taxon>Cupiennius</taxon>
    </lineage>
</organism>
<protein>
    <recommendedName>
        <fullName evidence="5">Toxin CSTX-14</fullName>
    </recommendedName>
    <component>
        <recommendedName>
            <fullName evidence="5">CSTX-14 A chain</fullName>
        </recommendedName>
    </component>
    <component>
        <recommendedName>
            <fullName evidence="5">CSTX-14 B chain</fullName>
        </recommendedName>
    </component>
</protein>
<dbReference type="SMR" id="B3EWS7"/>
<dbReference type="GO" id="GO:0005576">
    <property type="term" value="C:extracellular region"/>
    <property type="evidence" value="ECO:0007669"/>
    <property type="project" value="UniProtKB-SubCell"/>
</dbReference>
<dbReference type="GO" id="GO:0090729">
    <property type="term" value="F:toxin activity"/>
    <property type="evidence" value="ECO:0007669"/>
    <property type="project" value="UniProtKB-KW"/>
</dbReference>
<dbReference type="InterPro" id="IPR011142">
    <property type="entry name" value="Spider_toxin_CSTX_Knottin_CS"/>
</dbReference>
<dbReference type="PROSITE" id="PS60029">
    <property type="entry name" value="SPIDER_CSTX"/>
    <property type="match status" value="1"/>
</dbReference>
<name>TXC14_CUPSA</name>
<comment type="subunit">
    <text evidence="2">Heterodimer of A and B chains; disulfide-linked.</text>
</comment>
<comment type="subcellular location">
    <subcellularLocation>
        <location evidence="4">Secreted</location>
    </subcellularLocation>
</comment>
<comment type="tissue specificity">
    <text evidence="7">Expressed by the venom gland.</text>
</comment>
<comment type="domain">
    <text evidence="1">The presence of a 'disulfide through disulfide knot' structurally defines this protein as a knottin.</text>
</comment>
<comment type="PTM">
    <text evidence="4">Contains 4 disulfide bonds.</text>
</comment>
<comment type="mass spectrometry">
    <molecule>CSTX-14 A chain</molecule>
</comment>
<comment type="mass spectrometry">
    <molecule>CSTX-14 B chain</molecule>
</comment>
<comment type="similarity">
    <text evidence="3">Belongs to the neurotoxin 19 (CSTX) family. 12 subfamily.</text>
</comment>
<comment type="caution">
    <text evidence="6">It is probable that CSTX-14 A and B chains originate from the same gene. Both chains may be separated by some amino acids.</text>
</comment>
<comment type="caution">
    <text evidence="6">May be a cleavage product of CSTX-12.</text>
</comment>
<sequence>SDCTLRNHDCTDDRHSCCRSKMFKDVCKCFYPSQAKKELCTCQQDKHL</sequence>
<accession>B3EWS7</accession>
<keyword id="KW-0903">Direct protein sequencing</keyword>
<keyword id="KW-1015">Disulfide bond</keyword>
<keyword id="KW-0960">Knottin</keyword>
<keyword id="KW-0964">Secreted</keyword>
<keyword id="KW-0800">Toxin</keyword>
<reference key="1">
    <citation type="journal article" date="2012" name="FEBS J.">
        <title>Multicomponent venom of the spider Cupiennius salei: a bioanalytical investigation applying different strategies.</title>
        <authorList>
            <person name="Trachsel C."/>
            <person name="Siegemund D."/>
            <person name="Kampfer U."/>
            <person name="Kopp L.S."/>
            <person name="Buhr C."/>
            <person name="Grossmann J."/>
            <person name="Luthi C."/>
            <person name="Cunningham M."/>
            <person name="Nentwig W."/>
            <person name="Kuhn-Nentwig L."/>
            <person name="Schurch S."/>
            <person name="Schaller J."/>
        </authorList>
    </citation>
    <scope>PROTEIN SEQUENCE</scope>
    <scope>MASS SPECTROMETRY</scope>
    <scope>DISULFIDE BONDS</scope>
    <scope>SUBCELLULAR LOCATION</scope>
    <source>
        <tissue>Venom</tissue>
    </source>
</reference>
<feature type="peptide" id="PRO_0000421183" description="CSTX-14 A chain" evidence="4">
    <location>
        <begin position="1"/>
        <end position="34"/>
    </location>
</feature>
<feature type="peptide" id="PRO_0000421184" description="CSTX-14 B chain" evidence="4">
    <location>
        <begin position="35"/>
        <end position="48"/>
    </location>
</feature>
<feature type="disulfide bond" evidence="2">
    <location>
        <begin position="3"/>
        <end position="18"/>
    </location>
</feature>
<feature type="disulfide bond" evidence="2">
    <location>
        <begin position="10"/>
        <end position="27"/>
    </location>
</feature>
<feature type="disulfide bond" description="Interchain (between A and B chains)" evidence="2">
    <location>
        <begin position="17"/>
        <end position="42"/>
    </location>
</feature>
<feature type="disulfide bond" description="Interchain (between A and B chains)" evidence="2">
    <location>
        <begin position="29"/>
        <end position="40"/>
    </location>
</feature>
<feature type="non-consecutive residues" evidence="5">
    <location>
        <begin position="34"/>
        <end position="35"/>
    </location>
</feature>